<organismHost>
    <name type="scientific">Acanthamoeba polyphaga</name>
    <name type="common">Amoeba</name>
    <dbReference type="NCBI Taxonomy" id="5757"/>
</organismHost>
<feature type="chain" id="PRO_0000067141" description="Putative ankyrin repeat protein L56">
    <location>
        <begin position="1"/>
        <end position="604"/>
    </location>
</feature>
<feature type="repeat" description="ANK 1">
    <location>
        <begin position="77"/>
        <end position="106"/>
    </location>
</feature>
<feature type="repeat" description="ANK 2">
    <location>
        <begin position="135"/>
        <end position="164"/>
    </location>
</feature>
<feature type="repeat" description="ANK 3">
    <location>
        <begin position="166"/>
        <end position="189"/>
    </location>
</feature>
<feature type="repeat" description="ANK 4">
    <location>
        <begin position="190"/>
        <end position="219"/>
    </location>
</feature>
<feature type="repeat" description="ANK 5">
    <location>
        <begin position="221"/>
        <end position="247"/>
    </location>
</feature>
<feature type="repeat" description="ANK 6">
    <location>
        <begin position="248"/>
        <end position="277"/>
    </location>
</feature>
<feature type="repeat" description="ANK 7">
    <location>
        <begin position="314"/>
        <end position="341"/>
    </location>
</feature>
<feature type="repeat" description="ANK 8">
    <location>
        <begin position="342"/>
        <end position="371"/>
    </location>
</feature>
<feature type="repeat" description="ANK 9">
    <location>
        <begin position="380"/>
        <end position="410"/>
    </location>
</feature>
<feature type="repeat" description="ANK 10">
    <location>
        <begin position="445"/>
        <end position="474"/>
    </location>
</feature>
<feature type="repeat" description="ANK 11">
    <location>
        <begin position="475"/>
        <end position="504"/>
    </location>
</feature>
<feature type="repeat" description="ANK 12">
    <location>
        <begin position="505"/>
        <end position="534"/>
    </location>
</feature>
<feature type="repeat" description="ANK 13">
    <location>
        <begin position="535"/>
        <end position="565"/>
    </location>
</feature>
<sequence length="604" mass="70782">MDCMYDAELVDVVKNTSNESILPILEQKINLLVSSGETKCYRTLKRILYDFVTRKHLDGIMYILDSELLTDNVIRKIDRYCILLSCKFGFVELLEYLDEIGVDILVEKIYLELIFEDSFKYSRYDHDDEYYDDHFFKSSIHYAVKYGHMNIIEYLSCKKTNADGLLSACSLKNIQLVKYFLDQQNYDDNTIYHGLRSACWNGDLEMVKYFMQYIPEDKRNNVFILDHVCEEGYFDILVYLIEQKWKIDVEFAIKQTVMGGRLEMLKYLIAQYPDSKYSVVKLIETISYCGKDETLEYLLSFEDSKLKKFIKSNKFSKLLEVVCERGYLKVFKILFHLNENVDLREAFSNACQNGHLDIVQYIISNKKEFTDKNFLENDQEHITYLTRITFAKGHLDILKCLDEIGISRSYISEYAASLVIGNGFRSKKTLECVQWLFEDEKYHKYSQAIAVKAFRYDTVSVIKYLVSVGLDIKPITNIALDYICINNNMDCLKYLIENGTDITINDNRAIKLAAQEDNIDIVKCLVENGADIRTDDDYVMKICTLRNHKVLIRYLMSLDIKEPSNESIESIEPINTIKNPNKSEKNWIKHHCESIYYTKLMDRP</sequence>
<organism>
    <name type="scientific">Acanthamoeba polyphaga mimivirus</name>
    <name type="common">APMV</name>
    <dbReference type="NCBI Taxonomy" id="212035"/>
    <lineage>
        <taxon>Viruses</taxon>
        <taxon>Varidnaviria</taxon>
        <taxon>Bamfordvirae</taxon>
        <taxon>Nucleocytoviricota</taxon>
        <taxon>Megaviricetes</taxon>
        <taxon>Imitervirales</taxon>
        <taxon>Mimiviridae</taxon>
        <taxon>Megamimivirinae</taxon>
        <taxon>Mimivirus</taxon>
        <taxon>Mimivirus bradfordmassiliense</taxon>
    </lineage>
</organism>
<proteinExistence type="predicted"/>
<gene>
    <name type="ordered locus">MIMI_L56</name>
</gene>
<protein>
    <recommendedName>
        <fullName>Putative ankyrin repeat protein L56</fullName>
    </recommendedName>
</protein>
<keyword id="KW-0040">ANK repeat</keyword>
<keyword id="KW-1185">Reference proteome</keyword>
<keyword id="KW-0677">Repeat</keyword>
<dbReference type="EMBL" id="AY653733">
    <property type="protein sequence ID" value="AAV50331.1"/>
    <property type="molecule type" value="Genomic_DNA"/>
</dbReference>
<dbReference type="SMR" id="Q5UPD2"/>
<dbReference type="KEGG" id="vg:9924644"/>
<dbReference type="OrthoDB" id="32224at10239"/>
<dbReference type="Proteomes" id="UP000001134">
    <property type="component" value="Genome"/>
</dbReference>
<dbReference type="Gene3D" id="1.25.40.20">
    <property type="entry name" value="Ankyrin repeat-containing domain"/>
    <property type="match status" value="2"/>
</dbReference>
<dbReference type="InterPro" id="IPR002110">
    <property type="entry name" value="Ankyrin_rpt"/>
</dbReference>
<dbReference type="InterPro" id="IPR036770">
    <property type="entry name" value="Ankyrin_rpt-contain_sf"/>
</dbReference>
<dbReference type="InterPro" id="IPR052050">
    <property type="entry name" value="SecEffector_AnkRepeat"/>
</dbReference>
<dbReference type="PANTHER" id="PTHR46586">
    <property type="entry name" value="ANKYRIN REPEAT-CONTAINING PROTEIN"/>
    <property type="match status" value="1"/>
</dbReference>
<dbReference type="PANTHER" id="PTHR46586:SF3">
    <property type="entry name" value="ANKYRIN REPEAT-CONTAINING PROTEIN"/>
    <property type="match status" value="1"/>
</dbReference>
<dbReference type="Pfam" id="PF12796">
    <property type="entry name" value="Ank_2"/>
    <property type="match status" value="2"/>
</dbReference>
<dbReference type="SMART" id="SM00248">
    <property type="entry name" value="ANK"/>
    <property type="match status" value="8"/>
</dbReference>
<dbReference type="SUPFAM" id="SSF48403">
    <property type="entry name" value="Ankyrin repeat"/>
    <property type="match status" value="2"/>
</dbReference>
<dbReference type="PROSITE" id="PS50297">
    <property type="entry name" value="ANK_REP_REGION"/>
    <property type="match status" value="1"/>
</dbReference>
<dbReference type="PROSITE" id="PS50088">
    <property type="entry name" value="ANK_REPEAT"/>
    <property type="match status" value="1"/>
</dbReference>
<reference key="1">
    <citation type="journal article" date="2004" name="Science">
        <title>The 1.2-megabase genome sequence of Mimivirus.</title>
        <authorList>
            <person name="Raoult D."/>
            <person name="Audic S."/>
            <person name="Robert C."/>
            <person name="Abergel C."/>
            <person name="Renesto P."/>
            <person name="Ogata H."/>
            <person name="La Scola B."/>
            <person name="Susan M."/>
            <person name="Claverie J.-M."/>
        </authorList>
    </citation>
    <scope>NUCLEOTIDE SEQUENCE [LARGE SCALE GENOMIC DNA]</scope>
    <source>
        <strain>Rowbotham-Bradford</strain>
    </source>
</reference>
<accession>Q5UPD2</accession>
<name>YL056_MIMIV</name>